<organism>
    <name type="scientific">Mycobacterium tuberculosis (strain CDC 1551 / Oshkosh)</name>
    <dbReference type="NCBI Taxonomy" id="83331"/>
    <lineage>
        <taxon>Bacteria</taxon>
        <taxon>Bacillati</taxon>
        <taxon>Actinomycetota</taxon>
        <taxon>Actinomycetes</taxon>
        <taxon>Mycobacteriales</taxon>
        <taxon>Mycobacteriaceae</taxon>
        <taxon>Mycobacterium</taxon>
        <taxon>Mycobacterium tuberculosis complex</taxon>
    </lineage>
</organism>
<protein>
    <recommendedName>
        <fullName evidence="1">Biotin-dependent 3-methylcrotonyl-coenzyme A carboxylase alpha1 subunit</fullName>
    </recommendedName>
    <domain>
        <recommendedName>
            <fullName evidence="1">Biotin carboxylase</fullName>
            <shortName evidence="1">BC</shortName>
            <ecNumber evidence="1">6.3.4.14</ecNumber>
        </recommendedName>
    </domain>
    <domain>
        <recommendedName>
            <fullName evidence="1">Biotin carboxyl carrier protein</fullName>
            <shortName evidence="1">BCCP</shortName>
        </recommendedName>
    </domain>
</protein>
<evidence type="ECO:0000250" key="1">
    <source>
        <dbReference type="UniProtKB" id="P9WPQ3"/>
    </source>
</evidence>
<evidence type="ECO:0000255" key="2">
    <source>
        <dbReference type="PROSITE-ProRule" id="PRU00409"/>
    </source>
</evidence>
<evidence type="ECO:0000255" key="3">
    <source>
        <dbReference type="PROSITE-ProRule" id="PRU00969"/>
    </source>
</evidence>
<evidence type="ECO:0000255" key="4">
    <source>
        <dbReference type="PROSITE-ProRule" id="PRU01066"/>
    </source>
</evidence>
<keyword id="KW-0067">ATP-binding</keyword>
<keyword id="KW-0092">Biotin</keyword>
<keyword id="KW-0436">Ligase</keyword>
<keyword id="KW-0460">Magnesium</keyword>
<keyword id="KW-0464">Manganese</keyword>
<keyword id="KW-0479">Metal-binding</keyword>
<keyword id="KW-0547">Nucleotide-binding</keyword>
<keyword id="KW-1185">Reference proteome</keyword>
<reference key="1">
    <citation type="journal article" date="2002" name="J. Bacteriol.">
        <title>Whole-genome comparison of Mycobacterium tuberculosis clinical and laboratory strains.</title>
        <authorList>
            <person name="Fleischmann R.D."/>
            <person name="Alland D."/>
            <person name="Eisen J.A."/>
            <person name="Carpenter L."/>
            <person name="White O."/>
            <person name="Peterson J.D."/>
            <person name="DeBoy R.T."/>
            <person name="Dodson R.J."/>
            <person name="Gwinn M.L."/>
            <person name="Haft D.H."/>
            <person name="Hickey E.K."/>
            <person name="Kolonay J.F."/>
            <person name="Nelson W.C."/>
            <person name="Umayam L.A."/>
            <person name="Ermolaeva M.D."/>
            <person name="Salzberg S.L."/>
            <person name="Delcher A."/>
            <person name="Utterback T.R."/>
            <person name="Weidman J.F."/>
            <person name="Khouri H.M."/>
            <person name="Gill J."/>
            <person name="Mikula A."/>
            <person name="Bishai W."/>
            <person name="Jacobs W.R. Jr."/>
            <person name="Venter J.C."/>
            <person name="Fraser C.M."/>
        </authorList>
    </citation>
    <scope>NUCLEOTIDE SEQUENCE [LARGE SCALE GENOMIC DNA]</scope>
    <source>
        <strain>CDC 1551 / Oshkosh</strain>
    </source>
</reference>
<accession>P9WPQ2</accession>
<accession>L0T9T8</accession>
<accession>P0A508</accession>
<accession>P46401</accession>
<name>ACCA1_MYCTO</name>
<dbReference type="EC" id="6.3.4.14" evidence="1"/>
<dbReference type="EMBL" id="AE000516">
    <property type="protein sequence ID" value="AAK46880.1"/>
    <property type="molecule type" value="Genomic_DNA"/>
</dbReference>
<dbReference type="PIR" id="B55579">
    <property type="entry name" value="B55579"/>
</dbReference>
<dbReference type="RefSeq" id="WP_003899356.1">
    <property type="nucleotide sequence ID" value="NZ_KK341227.1"/>
</dbReference>
<dbReference type="SMR" id="P9WPQ2"/>
<dbReference type="KEGG" id="mtc:MT2576"/>
<dbReference type="PATRIC" id="fig|83331.31.peg.2778"/>
<dbReference type="HOGENOM" id="CLU_000395_3_1_11"/>
<dbReference type="UniPathway" id="UPA00363"/>
<dbReference type="Proteomes" id="UP000001020">
    <property type="component" value="Chromosome"/>
</dbReference>
<dbReference type="GO" id="GO:0005524">
    <property type="term" value="F:ATP binding"/>
    <property type="evidence" value="ECO:0007669"/>
    <property type="project" value="UniProtKB-KW"/>
</dbReference>
<dbReference type="GO" id="GO:0004075">
    <property type="term" value="F:biotin carboxylase activity"/>
    <property type="evidence" value="ECO:0007669"/>
    <property type="project" value="UniProtKB-EC"/>
</dbReference>
<dbReference type="GO" id="GO:0046872">
    <property type="term" value="F:metal ion binding"/>
    <property type="evidence" value="ECO:0007669"/>
    <property type="project" value="UniProtKB-KW"/>
</dbReference>
<dbReference type="GO" id="GO:0006552">
    <property type="term" value="P:L-leucine catabolic process"/>
    <property type="evidence" value="ECO:0007669"/>
    <property type="project" value="UniProtKB-UniPathway"/>
</dbReference>
<dbReference type="CDD" id="cd06850">
    <property type="entry name" value="biotinyl_domain"/>
    <property type="match status" value="1"/>
</dbReference>
<dbReference type="FunFam" id="2.40.50.100:FF:000003">
    <property type="entry name" value="Acetyl-CoA carboxylase biotin carboxyl carrier protein"/>
    <property type="match status" value="1"/>
</dbReference>
<dbReference type="FunFam" id="3.30.470.20:FF:000028">
    <property type="entry name" value="Methylcrotonoyl-CoA carboxylase subunit alpha, mitochondrial"/>
    <property type="match status" value="1"/>
</dbReference>
<dbReference type="FunFam" id="3.40.50.20:FF:000010">
    <property type="entry name" value="Propionyl-CoA carboxylase subunit alpha"/>
    <property type="match status" value="1"/>
</dbReference>
<dbReference type="Gene3D" id="2.40.50.100">
    <property type="match status" value="1"/>
</dbReference>
<dbReference type="Gene3D" id="3.30.470.20">
    <property type="entry name" value="ATP-grasp fold, B domain"/>
    <property type="match status" value="1"/>
</dbReference>
<dbReference type="InterPro" id="IPR011761">
    <property type="entry name" value="ATP-grasp"/>
</dbReference>
<dbReference type="InterPro" id="IPR005481">
    <property type="entry name" value="BC-like_N"/>
</dbReference>
<dbReference type="InterPro" id="IPR001882">
    <property type="entry name" value="Biotin_BS"/>
</dbReference>
<dbReference type="InterPro" id="IPR050856">
    <property type="entry name" value="Biotin_carboxylase_complex"/>
</dbReference>
<dbReference type="InterPro" id="IPR011764">
    <property type="entry name" value="Biotin_carboxylation_dom"/>
</dbReference>
<dbReference type="InterPro" id="IPR005482">
    <property type="entry name" value="Biotin_COase_C"/>
</dbReference>
<dbReference type="InterPro" id="IPR000089">
    <property type="entry name" value="Biotin_lipoyl"/>
</dbReference>
<dbReference type="InterPro" id="IPR005479">
    <property type="entry name" value="CbamoylP_synth_lsu-like_ATP-bd"/>
</dbReference>
<dbReference type="InterPro" id="IPR048429">
    <property type="entry name" value="MCC_alpha_BT"/>
</dbReference>
<dbReference type="InterPro" id="IPR016185">
    <property type="entry name" value="PreATP-grasp_dom_sf"/>
</dbReference>
<dbReference type="InterPro" id="IPR011054">
    <property type="entry name" value="Rudment_hybrid_motif"/>
</dbReference>
<dbReference type="InterPro" id="IPR011053">
    <property type="entry name" value="Single_hybrid_motif"/>
</dbReference>
<dbReference type="PANTHER" id="PTHR18866">
    <property type="entry name" value="CARBOXYLASE:PYRUVATE/ACETYL-COA/PROPIONYL-COA CARBOXYLASE"/>
    <property type="match status" value="1"/>
</dbReference>
<dbReference type="PANTHER" id="PTHR18866:SF33">
    <property type="entry name" value="METHYLCROTONOYL-COA CARBOXYLASE SUBUNIT ALPHA, MITOCHONDRIAL-RELATED"/>
    <property type="match status" value="1"/>
</dbReference>
<dbReference type="Pfam" id="PF02785">
    <property type="entry name" value="Biotin_carb_C"/>
    <property type="match status" value="1"/>
</dbReference>
<dbReference type="Pfam" id="PF00289">
    <property type="entry name" value="Biotin_carb_N"/>
    <property type="match status" value="1"/>
</dbReference>
<dbReference type="Pfam" id="PF00364">
    <property type="entry name" value="Biotin_lipoyl"/>
    <property type="match status" value="1"/>
</dbReference>
<dbReference type="Pfam" id="PF21139">
    <property type="entry name" value="BT_MCC_alpha"/>
    <property type="match status" value="1"/>
</dbReference>
<dbReference type="Pfam" id="PF02786">
    <property type="entry name" value="CPSase_L_D2"/>
    <property type="match status" value="1"/>
</dbReference>
<dbReference type="SMART" id="SM00878">
    <property type="entry name" value="Biotin_carb_C"/>
    <property type="match status" value="1"/>
</dbReference>
<dbReference type="SUPFAM" id="SSF56059">
    <property type="entry name" value="Glutathione synthetase ATP-binding domain-like"/>
    <property type="match status" value="1"/>
</dbReference>
<dbReference type="SUPFAM" id="SSF52440">
    <property type="entry name" value="PreATP-grasp domain"/>
    <property type="match status" value="1"/>
</dbReference>
<dbReference type="SUPFAM" id="SSF51246">
    <property type="entry name" value="Rudiment single hybrid motif"/>
    <property type="match status" value="1"/>
</dbReference>
<dbReference type="SUPFAM" id="SSF51230">
    <property type="entry name" value="Single hybrid motif"/>
    <property type="match status" value="1"/>
</dbReference>
<dbReference type="PROSITE" id="PS50975">
    <property type="entry name" value="ATP_GRASP"/>
    <property type="match status" value="1"/>
</dbReference>
<dbReference type="PROSITE" id="PS50979">
    <property type="entry name" value="BC"/>
    <property type="match status" value="1"/>
</dbReference>
<dbReference type="PROSITE" id="PS00188">
    <property type="entry name" value="BIOTIN"/>
    <property type="match status" value="1"/>
</dbReference>
<dbReference type="PROSITE" id="PS50968">
    <property type="entry name" value="BIOTINYL_LIPOYL"/>
    <property type="match status" value="1"/>
</dbReference>
<dbReference type="PROSITE" id="PS00866">
    <property type="entry name" value="CPSASE_1"/>
    <property type="match status" value="1"/>
</dbReference>
<dbReference type="PROSITE" id="PS00867">
    <property type="entry name" value="CPSASE_2"/>
    <property type="match status" value="1"/>
</dbReference>
<gene>
    <name type="primary">accA1</name>
    <name type="synonym">bccA</name>
    <name type="ordered locus">MT2576</name>
</gene>
<proteinExistence type="inferred from homology"/>
<sequence length="654" mass="70592">MFDTVLVANRGEIAVRVIRTLRRLGIRSVAVYSDPDVDARHVLEADAAVRLGPAPARESYLDIGKVLDAAARTGAQAIHPGYGFLAENADFAAACERARVVFLGPPARAIEVMGDKIAAKNAVAAFDVPVVPGVARAGLTDDALVTAAAEVGYPVLIKPSAGGGGKGMRLVQDPARLPEALVSARREAMSSFGDDTLFLERFVLRPRHIEVQVLADAHGNVVHLGERECSLQRRHQKVIEEAPSPLLDPQTRERIGVAACNTARCVDYVGAGTVEFIVSAQRPDEFFFMEMNTRLQVEHPVTEAITGLDLVEWQLRVGAGEKLGFAQNDIELRGHAIEARVYAEDPAREFLPTGGRVLAVFEPAGPGVRVDSSLLGGTVVGSDYDPLLTKVIAHGADREEALDRLDQALARTAVLGVQTNVEFLRFLLADERVRVGDLDTAVLDERSADFTARPAPDDVLAAGGLYRQWALARRAQGDLWAAPSGWRGGGHMAPVRTAMRTPLRSETVSVWGPPESAQVQVGDGEIDCASVQVTREQMSVTISGLRRDYRWAEADRHLWIADERGTWHLREAEEHKIHRAVGARPAEVVSPMPGSVIAVQVESGSQISAGDVVVVVEAMKMEHSLEAPVSGRVQVLVSVGDQVKVEQVLARIKD</sequence>
<feature type="chain" id="PRO_0000426912" description="Biotin-dependent 3-methylcrotonyl-coenzyme A carboxylase alpha1 subunit">
    <location>
        <begin position="1"/>
        <end position="654"/>
    </location>
</feature>
<feature type="domain" description="Biotin carboxylation" evidence="3">
    <location>
        <begin position="1"/>
        <end position="448"/>
    </location>
</feature>
<feature type="domain" description="ATP-grasp" evidence="2">
    <location>
        <begin position="120"/>
        <end position="319"/>
    </location>
</feature>
<feature type="domain" description="Biotinyl-binding" evidence="4">
    <location>
        <begin position="578"/>
        <end position="653"/>
    </location>
</feature>
<feature type="binding site" evidence="2">
    <location>
        <begin position="148"/>
        <end position="209"/>
    </location>
    <ligand>
        <name>ATP</name>
        <dbReference type="ChEBI" id="CHEBI:30616"/>
    </ligand>
</feature>
<feature type="binding site" evidence="2">
    <location>
        <position position="275"/>
    </location>
    <ligand>
        <name>Mg(2+)</name>
        <dbReference type="ChEBI" id="CHEBI:18420"/>
        <label>1</label>
    </ligand>
</feature>
<feature type="binding site" evidence="2">
    <location>
        <position position="275"/>
    </location>
    <ligand>
        <name>Mn(2+)</name>
        <dbReference type="ChEBI" id="CHEBI:29035"/>
        <label>1</label>
    </ligand>
</feature>
<feature type="binding site" evidence="2">
    <location>
        <position position="290"/>
    </location>
    <ligand>
        <name>Mg(2+)</name>
        <dbReference type="ChEBI" id="CHEBI:18420"/>
        <label>1</label>
    </ligand>
</feature>
<feature type="binding site" evidence="2">
    <location>
        <position position="290"/>
    </location>
    <ligand>
        <name>Mg(2+)</name>
        <dbReference type="ChEBI" id="CHEBI:18420"/>
        <label>2</label>
    </ligand>
</feature>
<feature type="binding site" evidence="2">
    <location>
        <position position="290"/>
    </location>
    <ligand>
        <name>Mn(2+)</name>
        <dbReference type="ChEBI" id="CHEBI:29035"/>
        <label>1</label>
    </ligand>
</feature>
<feature type="binding site" evidence="2">
    <location>
        <position position="290"/>
    </location>
    <ligand>
        <name>Mn(2+)</name>
        <dbReference type="ChEBI" id="CHEBI:29035"/>
        <label>2</label>
    </ligand>
</feature>
<feature type="binding site" evidence="2">
    <location>
        <position position="292"/>
    </location>
    <ligand>
        <name>Mg(2+)</name>
        <dbReference type="ChEBI" id="CHEBI:18420"/>
        <label>2</label>
    </ligand>
</feature>
<feature type="binding site" evidence="2">
    <location>
        <position position="292"/>
    </location>
    <ligand>
        <name>Mn(2+)</name>
        <dbReference type="ChEBI" id="CHEBI:29035"/>
        <label>2</label>
    </ligand>
</feature>
<feature type="modified residue" description="N6-biotinyllysine" evidence="4">
    <location>
        <position position="620"/>
    </location>
</feature>
<comment type="function">
    <text evidence="1">Component of a biotin-dependent acyl-CoA carboxylase complex. This subunit catalyzes the ATP-dependent carboxylation of the biotin carried by the biotin carboxyl carrier (BCC) domain, resulting in the formation of carboxyl biotin. When associated with the beta1 subunit AccD1, is involved in branched amino-acid catabolism with methylcrotonyl coenzyme A as the substrate.</text>
</comment>
<comment type="catalytic activity">
    <reaction evidence="1">
        <text>N(6)-biotinyl-L-lysyl-[protein] + hydrogencarbonate + ATP = N(6)-carboxybiotinyl-L-lysyl-[protein] + ADP + phosphate + H(+)</text>
        <dbReference type="Rhea" id="RHEA:13501"/>
        <dbReference type="Rhea" id="RHEA-COMP:10505"/>
        <dbReference type="Rhea" id="RHEA-COMP:10506"/>
        <dbReference type="ChEBI" id="CHEBI:15378"/>
        <dbReference type="ChEBI" id="CHEBI:17544"/>
        <dbReference type="ChEBI" id="CHEBI:30616"/>
        <dbReference type="ChEBI" id="CHEBI:43474"/>
        <dbReference type="ChEBI" id="CHEBI:83144"/>
        <dbReference type="ChEBI" id="CHEBI:83145"/>
        <dbReference type="ChEBI" id="CHEBI:456216"/>
        <dbReference type="EC" id="6.3.4.14"/>
    </reaction>
    <physiologicalReaction direction="left-to-right" evidence="1">
        <dbReference type="Rhea" id="RHEA:13502"/>
    </physiologicalReaction>
</comment>
<comment type="cofactor">
    <cofactor evidence="2">
        <name>Mg(2+)</name>
        <dbReference type="ChEBI" id="CHEBI:18420"/>
    </cofactor>
    <cofactor evidence="2">
        <name>Mn(2+)</name>
        <dbReference type="ChEBI" id="CHEBI:29035"/>
    </cofactor>
    <text evidence="2">Binds 2 magnesium or manganese ions per subunit.</text>
</comment>
<comment type="cofactor">
    <cofactor evidence="4">
        <name>biotin</name>
        <dbReference type="ChEBI" id="CHEBI:57586"/>
    </cofactor>
</comment>
<comment type="pathway">
    <text evidence="1">Amino-acid degradation; L-leucine degradation.</text>
</comment>
<comment type="subunit">
    <text evidence="1">The biotin-dependent acyl-CoA carboxylase complex is composed of AccA1, which contains the biotin carboxylase (BC) and biotin carboxyl carrier protein (BCCP) domains, and AccD1, which contains the carboxyl transferase (CT) domain. The AccA1/AccD1 complex forms a dodecamer.</text>
</comment>